<comment type="subcellular location">
    <subcellularLocation>
        <location evidence="1">Cytoplasm</location>
    </subcellularLocation>
</comment>
<comment type="similarity">
    <text evidence="1">Belongs to the UPF0291 family.</text>
</comment>
<gene>
    <name type="ordered locus">BLi02035</name>
    <name type="ordered locus">BL02933</name>
</gene>
<dbReference type="EMBL" id="AE017333">
    <property type="protein sequence ID" value="AAU40925.1"/>
    <property type="molecule type" value="Genomic_DNA"/>
</dbReference>
<dbReference type="EMBL" id="CP000002">
    <property type="protein sequence ID" value="AAU23563.1"/>
    <property type="molecule type" value="Genomic_DNA"/>
</dbReference>
<dbReference type="RefSeq" id="WP_003182231.1">
    <property type="nucleotide sequence ID" value="NC_006322.1"/>
</dbReference>
<dbReference type="SMR" id="Q65J39"/>
<dbReference type="STRING" id="279010.BL02933"/>
<dbReference type="KEGG" id="bld:BLi02035"/>
<dbReference type="KEGG" id="bli:BL02933"/>
<dbReference type="eggNOG" id="COG4224">
    <property type="taxonomic scope" value="Bacteria"/>
</dbReference>
<dbReference type="HOGENOM" id="CLU_173137_0_2_9"/>
<dbReference type="Proteomes" id="UP000000606">
    <property type="component" value="Chromosome"/>
</dbReference>
<dbReference type="GO" id="GO:0005737">
    <property type="term" value="C:cytoplasm"/>
    <property type="evidence" value="ECO:0007669"/>
    <property type="project" value="UniProtKB-SubCell"/>
</dbReference>
<dbReference type="Gene3D" id="1.10.287.540">
    <property type="entry name" value="Helix hairpin bin"/>
    <property type="match status" value="1"/>
</dbReference>
<dbReference type="HAMAP" id="MF_01103">
    <property type="entry name" value="UPF0291"/>
    <property type="match status" value="1"/>
</dbReference>
<dbReference type="InterPro" id="IPR009242">
    <property type="entry name" value="DUF896"/>
</dbReference>
<dbReference type="PANTHER" id="PTHR37300">
    <property type="entry name" value="UPF0291 PROTEIN CBO2609/CLC_2481"/>
    <property type="match status" value="1"/>
</dbReference>
<dbReference type="PANTHER" id="PTHR37300:SF1">
    <property type="entry name" value="UPF0291 PROTEIN YNZC"/>
    <property type="match status" value="1"/>
</dbReference>
<dbReference type="Pfam" id="PF05979">
    <property type="entry name" value="DUF896"/>
    <property type="match status" value="1"/>
</dbReference>
<dbReference type="SUPFAM" id="SSF158221">
    <property type="entry name" value="YnzC-like"/>
    <property type="match status" value="1"/>
</dbReference>
<name>Y2035_BACLD</name>
<proteinExistence type="inferred from homology"/>
<organism>
    <name type="scientific">Bacillus licheniformis (strain ATCC 14580 / DSM 13 / JCM 2505 / CCUG 7422 / NBRC 12200 / NCIMB 9375 / NCTC 10341 / NRRL NRS-1264 / Gibson 46)</name>
    <dbReference type="NCBI Taxonomy" id="279010"/>
    <lineage>
        <taxon>Bacteria</taxon>
        <taxon>Bacillati</taxon>
        <taxon>Bacillota</taxon>
        <taxon>Bacilli</taxon>
        <taxon>Bacillales</taxon>
        <taxon>Bacillaceae</taxon>
        <taxon>Bacillus</taxon>
    </lineage>
</organism>
<accession>Q65J39</accession>
<accession>Q62UJ6</accession>
<feature type="chain" id="PRO_0000094963" description="UPF0291 protein BLi02035/BL02933">
    <location>
        <begin position="1"/>
        <end position="77"/>
    </location>
</feature>
<feature type="region of interest" description="Disordered" evidence="2">
    <location>
        <begin position="57"/>
        <end position="77"/>
    </location>
</feature>
<keyword id="KW-0963">Cytoplasm</keyword>
<keyword id="KW-1185">Reference proteome</keyword>
<reference key="1">
    <citation type="journal article" date="2004" name="J. Mol. Microbiol. Biotechnol.">
        <title>The complete genome sequence of Bacillus licheniformis DSM13, an organism with great industrial potential.</title>
        <authorList>
            <person name="Veith B."/>
            <person name="Herzberg C."/>
            <person name="Steckel S."/>
            <person name="Feesche J."/>
            <person name="Maurer K.H."/>
            <person name="Ehrenreich P."/>
            <person name="Baeumer S."/>
            <person name="Henne A."/>
            <person name="Liesegang H."/>
            <person name="Merkl R."/>
            <person name="Ehrenreich A."/>
            <person name="Gottschalk G."/>
        </authorList>
    </citation>
    <scope>NUCLEOTIDE SEQUENCE [LARGE SCALE GENOMIC DNA]</scope>
    <source>
        <strain>ATCC 14580 / DSM 13 / JCM 2505 / CCUG 7422 / NBRC 12200 / NCIMB 9375 / NCTC 10341 / NRRL NRS-1264 / Gibson 46</strain>
    </source>
</reference>
<reference key="2">
    <citation type="journal article" date="2004" name="Genome Biol.">
        <title>Complete genome sequence of the industrial bacterium Bacillus licheniformis and comparisons with closely related Bacillus species.</title>
        <authorList>
            <person name="Rey M.W."/>
            <person name="Ramaiya P."/>
            <person name="Nelson B.A."/>
            <person name="Brody-Karpin S.D."/>
            <person name="Zaretsky E.J."/>
            <person name="Tang M."/>
            <person name="Lopez de Leon A."/>
            <person name="Xiang H."/>
            <person name="Gusti V."/>
            <person name="Clausen I.G."/>
            <person name="Olsen P.B."/>
            <person name="Rasmussen M.D."/>
            <person name="Andersen J.T."/>
            <person name="Joergensen P.L."/>
            <person name="Larsen T.S."/>
            <person name="Sorokin A."/>
            <person name="Bolotin A."/>
            <person name="Lapidus A."/>
            <person name="Galleron N."/>
            <person name="Ehrlich S.D."/>
            <person name="Berka R.M."/>
        </authorList>
    </citation>
    <scope>NUCLEOTIDE SEQUENCE [LARGE SCALE GENOMIC DNA]</scope>
    <source>
        <strain>ATCC 14580 / DSM 13 / JCM 2505 / CCUG 7422 / NBRC 12200 / NCIMB 9375 / NCTC 10341 / NRRL NRS-1264 / Gibson 46</strain>
    </source>
</reference>
<evidence type="ECO:0000255" key="1">
    <source>
        <dbReference type="HAMAP-Rule" id="MF_01103"/>
    </source>
</evidence>
<evidence type="ECO:0000256" key="2">
    <source>
        <dbReference type="SAM" id="MobiDB-lite"/>
    </source>
</evidence>
<sequence length="77" mass="8876">MISKEKIARINELAKKAKSGSLTDEEKAEQQKLRQEYLQGVRASMKNTLKTVTIVDPEGNDVTPEKLKQEKRNRRLH</sequence>
<protein>
    <recommendedName>
        <fullName evidence="1">UPF0291 protein BLi02035/BL02933</fullName>
    </recommendedName>
</protein>